<reference key="1">
    <citation type="journal article" date="2004" name="Genome Res.">
        <title>The status, quality, and expansion of the NIH full-length cDNA project: the Mammalian Gene Collection (MGC).</title>
        <authorList>
            <consortium name="The MGC Project Team"/>
        </authorList>
    </citation>
    <scope>NUCLEOTIDE SEQUENCE [LARGE SCALE MRNA]</scope>
    <source>
        <tissue>Brain</tissue>
    </source>
</reference>
<reference key="2">
    <citation type="submission" date="2007-09" db="UniProtKB">
        <authorList>
            <person name="Lubec G."/>
            <person name="Kang S.U."/>
            <person name="Lubec S."/>
        </authorList>
    </citation>
    <scope>PROTEIN SEQUENCE OF 17-25; 34-41; 49-61 AND 99-114</scope>
    <scope>IDENTIFICATION BY MASS SPECTROMETRY</scope>
    <source>
        <strain>Sprague-Dawley</strain>
        <tissue>Brain</tissue>
    </source>
</reference>
<reference key="3">
    <citation type="journal article" date="2012" name="Nat. Commun.">
        <title>Quantitative maps of protein phosphorylation sites across 14 different rat organs and tissues.</title>
        <authorList>
            <person name="Lundby A."/>
            <person name="Secher A."/>
            <person name="Lage K."/>
            <person name="Nordsborg N.B."/>
            <person name="Dmytriyev A."/>
            <person name="Lundby C."/>
            <person name="Olsen J.V."/>
        </authorList>
    </citation>
    <scope>PHOSPHORYLATION [LARGE SCALE ANALYSIS] AT SER-10 AND SER-90</scope>
    <scope>IDENTIFICATION BY MASS SPECTROMETRY [LARGE SCALE ANALYSIS]</scope>
</reference>
<evidence type="ECO:0000250" key="1">
    <source>
        <dbReference type="UniProtKB" id="Q8N111"/>
    </source>
</evidence>
<evidence type="ECO:0000250" key="2">
    <source>
        <dbReference type="UniProtKB" id="Q9JKC6"/>
    </source>
</evidence>
<evidence type="ECO:0000255" key="3"/>
<evidence type="ECO:0000256" key="4">
    <source>
        <dbReference type="SAM" id="MobiDB-lite"/>
    </source>
</evidence>
<evidence type="ECO:0000305" key="5"/>
<evidence type="ECO:0007744" key="6">
    <source>
    </source>
</evidence>
<proteinExistence type="evidence at protein level"/>
<dbReference type="EMBL" id="BC089963">
    <property type="protein sequence ID" value="AAH89963.1"/>
    <property type="molecule type" value="mRNA"/>
</dbReference>
<dbReference type="RefSeq" id="NP_001014185.1">
    <property type="nucleotide sequence ID" value="NM_001014163.1"/>
</dbReference>
<dbReference type="RefSeq" id="XP_003749055.1">
    <property type="nucleotide sequence ID" value="XM_003749007.4"/>
</dbReference>
<dbReference type="RefSeq" id="XP_008772956.1">
    <property type="nucleotide sequence ID" value="XM_008774734.2"/>
</dbReference>
<dbReference type="BioGRID" id="262868">
    <property type="interactions" value="2"/>
</dbReference>
<dbReference type="FunCoup" id="Q5FVI4">
    <property type="interactions" value="872"/>
</dbReference>
<dbReference type="IntAct" id="Q5FVI4">
    <property type="interactions" value="1"/>
</dbReference>
<dbReference type="MINT" id="Q5FVI4"/>
<dbReference type="STRING" id="10116.ENSRNOP00000024867"/>
<dbReference type="GlyGen" id="Q5FVI4">
    <property type="glycosylation" value="2 sites, 1 N-linked glycan (1 site)"/>
</dbReference>
<dbReference type="iPTMnet" id="Q5FVI4"/>
<dbReference type="PhosphoSitePlus" id="Q5FVI4"/>
<dbReference type="SwissPalm" id="Q5FVI4"/>
<dbReference type="jPOST" id="Q5FVI4"/>
<dbReference type="PaxDb" id="10116-ENSRNOP00000024867"/>
<dbReference type="Ensembl" id="ENSRNOT00000116264.1">
    <property type="protein sequence ID" value="ENSRNOP00000087482.1"/>
    <property type="gene ID" value="ENSRNOG00000062814.1"/>
</dbReference>
<dbReference type="GeneID" id="361675"/>
<dbReference type="KEGG" id="rno:361675"/>
<dbReference type="UCSC" id="RGD:1309401">
    <property type="organism name" value="rat"/>
</dbReference>
<dbReference type="AGR" id="RGD:1309401"/>
<dbReference type="CTD" id="51286"/>
<dbReference type="RGD" id="1309401">
    <property type="gene designation" value="Cend1"/>
</dbReference>
<dbReference type="eggNOG" id="ENOG502SGTV">
    <property type="taxonomic scope" value="Eukaryota"/>
</dbReference>
<dbReference type="GeneTree" id="ENSGT00390000012831"/>
<dbReference type="HOGENOM" id="CLU_1748972_0_0_1"/>
<dbReference type="InParanoid" id="Q5FVI4"/>
<dbReference type="OMA" id="WSCENLN"/>
<dbReference type="OrthoDB" id="9751599at2759"/>
<dbReference type="PhylomeDB" id="Q5FVI4"/>
<dbReference type="TreeFam" id="TF336209"/>
<dbReference type="PRO" id="PR:Q5FVI4"/>
<dbReference type="Proteomes" id="UP000002494">
    <property type="component" value="Chromosome 1"/>
</dbReference>
<dbReference type="Bgee" id="ENSRNOG00000018448">
    <property type="expression patterns" value="Expressed in cerebellum and 10 other cell types or tissues"/>
</dbReference>
<dbReference type="ExpressionAtlas" id="Q5FVI4">
    <property type="expression patterns" value="baseline"/>
</dbReference>
<dbReference type="GO" id="GO:0016020">
    <property type="term" value="C:membrane"/>
    <property type="evidence" value="ECO:0007669"/>
    <property type="project" value="UniProtKB-SubCell"/>
</dbReference>
<dbReference type="GO" id="GO:0005739">
    <property type="term" value="C:mitochondrion"/>
    <property type="evidence" value="ECO:0000266"/>
    <property type="project" value="RGD"/>
</dbReference>
<dbReference type="GO" id="GO:0031982">
    <property type="term" value="C:vesicle"/>
    <property type="evidence" value="ECO:0000266"/>
    <property type="project" value="RGD"/>
</dbReference>
<dbReference type="GO" id="GO:0007628">
    <property type="term" value="P:adult walking behavior"/>
    <property type="evidence" value="ECO:0000266"/>
    <property type="project" value="RGD"/>
</dbReference>
<dbReference type="GO" id="GO:0021686">
    <property type="term" value="P:cerebellar granular layer maturation"/>
    <property type="evidence" value="ECO:0000266"/>
    <property type="project" value="RGD"/>
</dbReference>
<dbReference type="GO" id="GO:0021702">
    <property type="term" value="P:cerebellar Purkinje cell differentiation"/>
    <property type="evidence" value="ECO:0000266"/>
    <property type="project" value="RGD"/>
</dbReference>
<dbReference type="GO" id="GO:0021941">
    <property type="term" value="P:negative regulation of cerebellar granule cell precursor proliferation"/>
    <property type="evidence" value="ECO:0000266"/>
    <property type="project" value="RGD"/>
</dbReference>
<dbReference type="GO" id="GO:0030182">
    <property type="term" value="P:neuron differentiation"/>
    <property type="evidence" value="ECO:0000266"/>
    <property type="project" value="RGD"/>
</dbReference>
<dbReference type="GO" id="GO:0021933">
    <property type="term" value="P:radial glia guided migration of cerebellar granule cell"/>
    <property type="evidence" value="ECO:0000266"/>
    <property type="project" value="RGD"/>
</dbReference>
<dbReference type="InterPro" id="IPR020162">
    <property type="entry name" value="Cend1"/>
</dbReference>
<dbReference type="PANTHER" id="PTHR36683">
    <property type="entry name" value="CELL CYCLE EXIT AND NEURONAL DIFFERENTIATION PROTEIN 1"/>
    <property type="match status" value="1"/>
</dbReference>
<dbReference type="PANTHER" id="PTHR36683:SF1">
    <property type="entry name" value="CELL CYCLE EXIT AND NEURONAL DIFFERENTIATION PROTEIN 1"/>
    <property type="match status" value="1"/>
</dbReference>
<dbReference type="Pfam" id="PF15677">
    <property type="entry name" value="CEND1"/>
    <property type="match status" value="1"/>
</dbReference>
<protein>
    <recommendedName>
        <fullName>Cell cycle exit and neuronal differentiation protein 1</fullName>
    </recommendedName>
</protein>
<sequence>MESRGKSASSPKPDTKVPQATAEAKATPAADGKAPLTKPVKKDAQAEKQEQPAAPGPATTKKTPAKADPVLLNNHSNLKPAPTVPAAPSSPDTTSEPKGPGDGAEEDESNTGGRGPWPCENLTPLLVAGGVAVATIALILGVAFLARKK</sequence>
<name>CEND_RAT</name>
<comment type="function">
    <text evidence="2">Involved in neuronal differentiation.</text>
</comment>
<comment type="subunit">
    <text evidence="1 2">Homodimer (By similarity). Interacts with AHI1 (By similarity).</text>
</comment>
<comment type="subcellular location">
    <subcellularLocation>
        <location evidence="5">Membrane</location>
        <topology evidence="5">Single-pass type IV membrane protein</topology>
    </subcellularLocation>
</comment>
<comment type="similarity">
    <text evidence="5">Belongs to the CEND1 family.</text>
</comment>
<feature type="chain" id="PRO_0000245465" description="Cell cycle exit and neuronal differentiation protein 1">
    <location>
        <begin position="1"/>
        <end position="149"/>
    </location>
</feature>
<feature type="topological domain" description="Cytoplasmic" evidence="3">
    <location>
        <begin position="1"/>
        <end position="125"/>
    </location>
</feature>
<feature type="transmembrane region" description="Helical; Anchor for type IV membrane protein" evidence="3">
    <location>
        <begin position="126"/>
        <end position="146"/>
    </location>
</feature>
<feature type="topological domain" description="Extracellular" evidence="3">
    <location>
        <begin position="147"/>
        <end position="149"/>
    </location>
</feature>
<feature type="region of interest" description="Disordered" evidence="4">
    <location>
        <begin position="1"/>
        <end position="118"/>
    </location>
</feature>
<feature type="compositionally biased region" description="Polar residues" evidence="4">
    <location>
        <begin position="1"/>
        <end position="12"/>
    </location>
</feature>
<feature type="compositionally biased region" description="Low complexity" evidence="4">
    <location>
        <begin position="20"/>
        <end position="35"/>
    </location>
</feature>
<feature type="compositionally biased region" description="Basic and acidic residues" evidence="4">
    <location>
        <begin position="40"/>
        <end position="50"/>
    </location>
</feature>
<feature type="compositionally biased region" description="Low complexity" evidence="4">
    <location>
        <begin position="80"/>
        <end position="97"/>
    </location>
</feature>
<feature type="modified residue" description="Phosphoserine" evidence="6">
    <location>
        <position position="10"/>
    </location>
</feature>
<feature type="modified residue" description="Phosphoserine" evidence="6">
    <location>
        <position position="90"/>
    </location>
</feature>
<feature type="modified residue" description="Phosphoserine" evidence="2">
    <location>
        <position position="95"/>
    </location>
</feature>
<accession>Q5FVI4</accession>
<gene>
    <name type="primary">Cend1</name>
</gene>
<keyword id="KW-0221">Differentiation</keyword>
<keyword id="KW-0903">Direct protein sequencing</keyword>
<keyword id="KW-0472">Membrane</keyword>
<keyword id="KW-0597">Phosphoprotein</keyword>
<keyword id="KW-1185">Reference proteome</keyword>
<keyword id="KW-0812">Transmembrane</keyword>
<keyword id="KW-1133">Transmembrane helix</keyword>
<organism>
    <name type="scientific">Rattus norvegicus</name>
    <name type="common">Rat</name>
    <dbReference type="NCBI Taxonomy" id="10116"/>
    <lineage>
        <taxon>Eukaryota</taxon>
        <taxon>Metazoa</taxon>
        <taxon>Chordata</taxon>
        <taxon>Craniata</taxon>
        <taxon>Vertebrata</taxon>
        <taxon>Euteleostomi</taxon>
        <taxon>Mammalia</taxon>
        <taxon>Eutheria</taxon>
        <taxon>Euarchontoglires</taxon>
        <taxon>Glires</taxon>
        <taxon>Rodentia</taxon>
        <taxon>Myomorpha</taxon>
        <taxon>Muroidea</taxon>
        <taxon>Muridae</taxon>
        <taxon>Murinae</taxon>
        <taxon>Rattus</taxon>
    </lineage>
</organism>